<sequence>MLRVLIVDDEMLARDELAYLLKRTNDEMEINEAENIESAFDQMMDQKPDLLFLDVDLSGENGFDIAKRLKKMKHPPAIVFATAYDQYALKAFEVDALDYLTKPFDEERIQQTLKKYKKVNRDIVETEQNSHAGQHKLALSVGESIVIVDTKDIIYAGTEDGHVNVKTFDHSYTVSDTLVVIEKKLPDSDFIRVHRSFVVNTEYIKEIQPWFNSTYNLIMKDGSKIPVSRTYAKELKKLLHI</sequence>
<comment type="function">
    <text evidence="3">Member of the two-component regulatory system LytS/LytT that probably regulates genes involved in cell wall metabolism.</text>
</comment>
<comment type="subcellular location">
    <subcellularLocation>
        <location evidence="4">Cytoplasm</location>
    </subcellularLocation>
</comment>
<comment type="PTM">
    <text evidence="4">Phosphorylated by LytS.</text>
</comment>
<accession>P94514</accession>
<gene>
    <name type="primary">lytT</name>
    <name type="ordered locus">BSU28920</name>
</gene>
<feature type="chain" id="PRO_0000081123" description="Sensory transduction protein LytT">
    <location>
        <begin position="1"/>
        <end position="241"/>
    </location>
</feature>
<feature type="domain" description="Response regulatory" evidence="2">
    <location>
        <begin position="3"/>
        <end position="117"/>
    </location>
</feature>
<feature type="domain" description="HTH LytTR-type" evidence="1">
    <location>
        <begin position="137"/>
        <end position="241"/>
    </location>
</feature>
<feature type="modified residue" description="4-aspartylphosphate" evidence="2">
    <location>
        <position position="54"/>
    </location>
</feature>
<organism>
    <name type="scientific">Bacillus subtilis (strain 168)</name>
    <dbReference type="NCBI Taxonomy" id="224308"/>
    <lineage>
        <taxon>Bacteria</taxon>
        <taxon>Bacillati</taxon>
        <taxon>Bacillota</taxon>
        <taxon>Bacilli</taxon>
        <taxon>Bacillales</taxon>
        <taxon>Bacillaceae</taxon>
        <taxon>Bacillus</taxon>
    </lineage>
</organism>
<name>LYTT_BACSU</name>
<protein>
    <recommendedName>
        <fullName>Sensory transduction protein LytT</fullName>
    </recommendedName>
</protein>
<proteinExistence type="inferred from homology"/>
<dbReference type="EMBL" id="Z75208">
    <property type="protein sequence ID" value="CAA99611.1"/>
    <property type="molecule type" value="Genomic_DNA"/>
</dbReference>
<dbReference type="EMBL" id="AL009126">
    <property type="protein sequence ID" value="CAB14852.1"/>
    <property type="molecule type" value="Genomic_DNA"/>
</dbReference>
<dbReference type="PIR" id="B69655">
    <property type="entry name" value="B69655"/>
</dbReference>
<dbReference type="RefSeq" id="NP_390770.1">
    <property type="nucleotide sequence ID" value="NC_000964.3"/>
</dbReference>
<dbReference type="RefSeq" id="WP_003229479.1">
    <property type="nucleotide sequence ID" value="NZ_OZ025638.1"/>
</dbReference>
<dbReference type="SMR" id="P94514"/>
<dbReference type="FunCoup" id="P94514">
    <property type="interactions" value="271"/>
</dbReference>
<dbReference type="IntAct" id="P94514">
    <property type="interactions" value="1"/>
</dbReference>
<dbReference type="STRING" id="224308.BSU28920"/>
<dbReference type="PaxDb" id="224308-BSU28920"/>
<dbReference type="EnsemblBacteria" id="CAB14852">
    <property type="protein sequence ID" value="CAB14852"/>
    <property type="gene ID" value="BSU_28920"/>
</dbReference>
<dbReference type="GeneID" id="936931"/>
<dbReference type="KEGG" id="bsu:BSU28920"/>
<dbReference type="PATRIC" id="fig|224308.179.peg.3140"/>
<dbReference type="eggNOG" id="COG3279">
    <property type="taxonomic scope" value="Bacteria"/>
</dbReference>
<dbReference type="InParanoid" id="P94514"/>
<dbReference type="OrthoDB" id="9809318at2"/>
<dbReference type="PhylomeDB" id="P94514"/>
<dbReference type="BioCyc" id="BSUB:BSU28920-MONOMER"/>
<dbReference type="Proteomes" id="UP000001570">
    <property type="component" value="Chromosome"/>
</dbReference>
<dbReference type="GO" id="GO:0005829">
    <property type="term" value="C:cytosol"/>
    <property type="evidence" value="ECO:0000318"/>
    <property type="project" value="GO_Central"/>
</dbReference>
<dbReference type="GO" id="GO:0032993">
    <property type="term" value="C:protein-DNA complex"/>
    <property type="evidence" value="ECO:0000318"/>
    <property type="project" value="GO_Central"/>
</dbReference>
<dbReference type="GO" id="GO:0000156">
    <property type="term" value="F:phosphorelay response regulator activity"/>
    <property type="evidence" value="ECO:0000318"/>
    <property type="project" value="GO_Central"/>
</dbReference>
<dbReference type="GO" id="GO:0000976">
    <property type="term" value="F:transcription cis-regulatory region binding"/>
    <property type="evidence" value="ECO:0000318"/>
    <property type="project" value="GO_Central"/>
</dbReference>
<dbReference type="GO" id="GO:0006355">
    <property type="term" value="P:regulation of DNA-templated transcription"/>
    <property type="evidence" value="ECO:0000318"/>
    <property type="project" value="GO_Central"/>
</dbReference>
<dbReference type="CDD" id="cd17532">
    <property type="entry name" value="REC_LytTR_AlgR-like"/>
    <property type="match status" value="1"/>
</dbReference>
<dbReference type="FunFam" id="3.40.50.2300:FF:000134">
    <property type="entry name" value="Autolysin response regulator LytR"/>
    <property type="match status" value="1"/>
</dbReference>
<dbReference type="FunFam" id="2.20.25.10:FF:000010">
    <property type="entry name" value="Two-component system response regulator"/>
    <property type="match status" value="1"/>
</dbReference>
<dbReference type="Gene3D" id="2.20.25.10">
    <property type="match status" value="1"/>
</dbReference>
<dbReference type="Gene3D" id="2.40.50.40">
    <property type="match status" value="1"/>
</dbReference>
<dbReference type="Gene3D" id="3.40.50.2300">
    <property type="match status" value="1"/>
</dbReference>
<dbReference type="InterPro" id="IPR011006">
    <property type="entry name" value="CheY-like_superfamily"/>
</dbReference>
<dbReference type="InterPro" id="IPR046947">
    <property type="entry name" value="LytR-like"/>
</dbReference>
<dbReference type="InterPro" id="IPR007492">
    <property type="entry name" value="LytTR_DNA-bd_dom"/>
</dbReference>
<dbReference type="InterPro" id="IPR001789">
    <property type="entry name" value="Sig_transdc_resp-reg_receiver"/>
</dbReference>
<dbReference type="PANTHER" id="PTHR37299:SF1">
    <property type="entry name" value="STAGE 0 SPORULATION PROTEIN A HOMOLOG"/>
    <property type="match status" value="1"/>
</dbReference>
<dbReference type="PANTHER" id="PTHR37299">
    <property type="entry name" value="TRANSCRIPTIONAL REGULATOR-RELATED"/>
    <property type="match status" value="1"/>
</dbReference>
<dbReference type="Pfam" id="PF04397">
    <property type="entry name" value="LytTR"/>
    <property type="match status" value="1"/>
</dbReference>
<dbReference type="Pfam" id="PF00072">
    <property type="entry name" value="Response_reg"/>
    <property type="match status" value="1"/>
</dbReference>
<dbReference type="SMART" id="SM00850">
    <property type="entry name" value="LytTR"/>
    <property type="match status" value="1"/>
</dbReference>
<dbReference type="SMART" id="SM00448">
    <property type="entry name" value="REC"/>
    <property type="match status" value="1"/>
</dbReference>
<dbReference type="SUPFAM" id="SSF52172">
    <property type="entry name" value="CheY-like"/>
    <property type="match status" value="1"/>
</dbReference>
<dbReference type="PROSITE" id="PS50930">
    <property type="entry name" value="HTH_LYTTR"/>
    <property type="match status" value="1"/>
</dbReference>
<dbReference type="PROSITE" id="PS50110">
    <property type="entry name" value="RESPONSE_REGULATORY"/>
    <property type="match status" value="1"/>
</dbReference>
<keyword id="KW-0963">Cytoplasm</keyword>
<keyword id="KW-0238">DNA-binding</keyword>
<keyword id="KW-0597">Phosphoprotein</keyword>
<keyword id="KW-1185">Reference proteome</keyword>
<keyword id="KW-0804">Transcription</keyword>
<keyword id="KW-0805">Transcription regulation</keyword>
<keyword id="KW-0902">Two-component regulatory system</keyword>
<reference key="1">
    <citation type="journal article" date="1996" name="Microbiology">
        <title>The dnaB-pheA (256 degrees-240 degrees) region of the Bacillus subtilis chromosome containing genes responsible for stress responses, the utilization of plant cell walls and primary metabolism.</title>
        <authorList>
            <person name="Wipat A."/>
            <person name="Carter N."/>
            <person name="Brignell C.S."/>
            <person name="Guy J.B."/>
            <person name="Piper K."/>
            <person name="Sanders J."/>
            <person name="Emmerson P.T."/>
            <person name="Harwood C.R."/>
        </authorList>
    </citation>
    <scope>NUCLEOTIDE SEQUENCE [GENOMIC DNA]</scope>
    <source>
        <strain>168</strain>
    </source>
</reference>
<reference key="2">
    <citation type="journal article" date="1997" name="Nature">
        <title>The complete genome sequence of the Gram-positive bacterium Bacillus subtilis.</title>
        <authorList>
            <person name="Kunst F."/>
            <person name="Ogasawara N."/>
            <person name="Moszer I."/>
            <person name="Albertini A.M."/>
            <person name="Alloni G."/>
            <person name="Azevedo V."/>
            <person name="Bertero M.G."/>
            <person name="Bessieres P."/>
            <person name="Bolotin A."/>
            <person name="Borchert S."/>
            <person name="Borriss R."/>
            <person name="Boursier L."/>
            <person name="Brans A."/>
            <person name="Braun M."/>
            <person name="Brignell S.C."/>
            <person name="Bron S."/>
            <person name="Brouillet S."/>
            <person name="Bruschi C.V."/>
            <person name="Caldwell B."/>
            <person name="Capuano V."/>
            <person name="Carter N.M."/>
            <person name="Choi S.-K."/>
            <person name="Codani J.-J."/>
            <person name="Connerton I.F."/>
            <person name="Cummings N.J."/>
            <person name="Daniel R.A."/>
            <person name="Denizot F."/>
            <person name="Devine K.M."/>
            <person name="Duesterhoeft A."/>
            <person name="Ehrlich S.D."/>
            <person name="Emmerson P.T."/>
            <person name="Entian K.-D."/>
            <person name="Errington J."/>
            <person name="Fabret C."/>
            <person name="Ferrari E."/>
            <person name="Foulger D."/>
            <person name="Fritz C."/>
            <person name="Fujita M."/>
            <person name="Fujita Y."/>
            <person name="Fuma S."/>
            <person name="Galizzi A."/>
            <person name="Galleron N."/>
            <person name="Ghim S.-Y."/>
            <person name="Glaser P."/>
            <person name="Goffeau A."/>
            <person name="Golightly E.J."/>
            <person name="Grandi G."/>
            <person name="Guiseppi G."/>
            <person name="Guy B.J."/>
            <person name="Haga K."/>
            <person name="Haiech J."/>
            <person name="Harwood C.R."/>
            <person name="Henaut A."/>
            <person name="Hilbert H."/>
            <person name="Holsappel S."/>
            <person name="Hosono S."/>
            <person name="Hullo M.-F."/>
            <person name="Itaya M."/>
            <person name="Jones L.-M."/>
            <person name="Joris B."/>
            <person name="Karamata D."/>
            <person name="Kasahara Y."/>
            <person name="Klaerr-Blanchard M."/>
            <person name="Klein C."/>
            <person name="Kobayashi Y."/>
            <person name="Koetter P."/>
            <person name="Koningstein G."/>
            <person name="Krogh S."/>
            <person name="Kumano M."/>
            <person name="Kurita K."/>
            <person name="Lapidus A."/>
            <person name="Lardinois S."/>
            <person name="Lauber J."/>
            <person name="Lazarevic V."/>
            <person name="Lee S.-M."/>
            <person name="Levine A."/>
            <person name="Liu H."/>
            <person name="Masuda S."/>
            <person name="Mauel C."/>
            <person name="Medigue C."/>
            <person name="Medina N."/>
            <person name="Mellado R.P."/>
            <person name="Mizuno M."/>
            <person name="Moestl D."/>
            <person name="Nakai S."/>
            <person name="Noback M."/>
            <person name="Noone D."/>
            <person name="O'Reilly M."/>
            <person name="Ogawa K."/>
            <person name="Ogiwara A."/>
            <person name="Oudega B."/>
            <person name="Park S.-H."/>
            <person name="Parro V."/>
            <person name="Pohl T.M."/>
            <person name="Portetelle D."/>
            <person name="Porwollik S."/>
            <person name="Prescott A.M."/>
            <person name="Presecan E."/>
            <person name="Pujic P."/>
            <person name="Purnelle B."/>
            <person name="Rapoport G."/>
            <person name="Rey M."/>
            <person name="Reynolds S."/>
            <person name="Rieger M."/>
            <person name="Rivolta C."/>
            <person name="Rocha E."/>
            <person name="Roche B."/>
            <person name="Rose M."/>
            <person name="Sadaie Y."/>
            <person name="Sato T."/>
            <person name="Scanlan E."/>
            <person name="Schleich S."/>
            <person name="Schroeter R."/>
            <person name="Scoffone F."/>
            <person name="Sekiguchi J."/>
            <person name="Sekowska A."/>
            <person name="Seror S.J."/>
            <person name="Serror P."/>
            <person name="Shin B.-S."/>
            <person name="Soldo B."/>
            <person name="Sorokin A."/>
            <person name="Tacconi E."/>
            <person name="Takagi T."/>
            <person name="Takahashi H."/>
            <person name="Takemaru K."/>
            <person name="Takeuchi M."/>
            <person name="Tamakoshi A."/>
            <person name="Tanaka T."/>
            <person name="Terpstra P."/>
            <person name="Tognoni A."/>
            <person name="Tosato V."/>
            <person name="Uchiyama S."/>
            <person name="Vandenbol M."/>
            <person name="Vannier F."/>
            <person name="Vassarotti A."/>
            <person name="Viari A."/>
            <person name="Wambutt R."/>
            <person name="Wedler E."/>
            <person name="Wedler H."/>
            <person name="Weitzenegger T."/>
            <person name="Winters P."/>
            <person name="Wipat A."/>
            <person name="Yamamoto H."/>
            <person name="Yamane K."/>
            <person name="Yasumoto K."/>
            <person name="Yata K."/>
            <person name="Yoshida K."/>
            <person name="Yoshikawa H.-F."/>
            <person name="Zumstein E."/>
            <person name="Yoshikawa H."/>
            <person name="Danchin A."/>
        </authorList>
    </citation>
    <scope>NUCLEOTIDE SEQUENCE [LARGE SCALE GENOMIC DNA]</scope>
    <source>
        <strain>168</strain>
    </source>
</reference>
<reference key="3">
    <citation type="journal article" date="2001" name="J. Bacteriol.">
        <title>Comprehensive DNA microarray analysis of Bacillus subtilis two-component regulatory systems.</title>
        <authorList>
            <person name="Kobayashi K."/>
            <person name="Ogura M."/>
            <person name="Yamaguchi H."/>
            <person name="Yoshida K."/>
            <person name="Ogasawara N."/>
            <person name="Tanaka T."/>
            <person name="Fujita Y."/>
        </authorList>
    </citation>
    <scope>FUNCTION</scope>
</reference>
<evidence type="ECO:0000255" key="1">
    <source>
        <dbReference type="PROSITE-ProRule" id="PRU00112"/>
    </source>
</evidence>
<evidence type="ECO:0000255" key="2">
    <source>
        <dbReference type="PROSITE-ProRule" id="PRU00169"/>
    </source>
</evidence>
<evidence type="ECO:0000269" key="3">
    <source>
    </source>
</evidence>
<evidence type="ECO:0000305" key="4"/>